<comment type="function">
    <text evidence="1">A core subunit of photosystem II (PSII), probably helps stabilize the reaction center.</text>
</comment>
<comment type="subunit">
    <text evidence="1">PSII is composed of 1 copy each of membrane proteins PsbA, PsbB, PsbC, PsbD, PsbE, PsbF, PsbH, PsbI, PsbJ, PsbK, PsbL, PsbM, PsbT, PsbX, PsbY, PsbZ, Psb30/Ycf12, peripheral proteins PsbO, CyanoQ (PsbQ), PsbU, PsbV and a large number of cofactors. It forms dimeric complexes.</text>
</comment>
<comment type="subcellular location">
    <subcellularLocation>
        <location evidence="1">Cellular thylakoid membrane</location>
        <topology evidence="1">Single-pass membrane protein</topology>
    </subcellularLocation>
</comment>
<comment type="similarity">
    <text evidence="1">Belongs to the Psb30/Ycf12 family.</text>
</comment>
<name>PSB30_RIPO1</name>
<accession>B7K1L1</accession>
<sequence length="39" mass="4203">MELLAALNLEPIFQLTFVGLIMVAGPVVIFLLAFRGGDL</sequence>
<feature type="chain" id="PRO_1000142214" description="Photosystem II reaction center protein Psb30">
    <location>
        <begin position="1"/>
        <end position="39"/>
    </location>
</feature>
<feature type="transmembrane region" description="Helical" evidence="1">
    <location>
        <begin position="12"/>
        <end position="32"/>
    </location>
</feature>
<dbReference type="EMBL" id="CP001287">
    <property type="protein sequence ID" value="ACK67553.1"/>
    <property type="molecule type" value="Genomic_DNA"/>
</dbReference>
<dbReference type="RefSeq" id="WP_012596811.1">
    <property type="nucleotide sequence ID" value="NC_011726.1"/>
</dbReference>
<dbReference type="SMR" id="B7K1L1"/>
<dbReference type="STRING" id="41431.PCC8801_3591"/>
<dbReference type="KEGG" id="cyp:PCC8801_3591"/>
<dbReference type="eggNOG" id="ENOG5032GTP">
    <property type="taxonomic scope" value="Bacteria"/>
</dbReference>
<dbReference type="HOGENOM" id="CLU_196761_1_0_3"/>
<dbReference type="OrthoDB" id="516821at2"/>
<dbReference type="Proteomes" id="UP000008204">
    <property type="component" value="Chromosome"/>
</dbReference>
<dbReference type="GO" id="GO:0009523">
    <property type="term" value="C:photosystem II"/>
    <property type="evidence" value="ECO:0007669"/>
    <property type="project" value="UniProtKB-KW"/>
</dbReference>
<dbReference type="GO" id="GO:0031676">
    <property type="term" value="C:plasma membrane-derived thylakoid membrane"/>
    <property type="evidence" value="ECO:0007669"/>
    <property type="project" value="UniProtKB-SubCell"/>
</dbReference>
<dbReference type="GO" id="GO:0015979">
    <property type="term" value="P:photosynthesis"/>
    <property type="evidence" value="ECO:0007669"/>
    <property type="project" value="UniProtKB-KW"/>
</dbReference>
<dbReference type="HAMAP" id="MF_01329">
    <property type="entry name" value="PSII_Psb30_Ycf12"/>
    <property type="match status" value="1"/>
</dbReference>
<dbReference type="InterPro" id="IPR010284">
    <property type="entry name" value="PSII_Ycf12_core-subunit"/>
</dbReference>
<dbReference type="NCBIfam" id="NF010239">
    <property type="entry name" value="PRK13686.1"/>
    <property type="match status" value="1"/>
</dbReference>
<dbReference type="Pfam" id="PF05969">
    <property type="entry name" value="PSII_Ycf12"/>
    <property type="match status" value="1"/>
</dbReference>
<protein>
    <recommendedName>
        <fullName evidence="1">Photosystem II reaction center protein Psb30</fullName>
    </recommendedName>
    <alternativeName>
        <fullName evidence="1">Photosystem II reaction center protein Ycf12</fullName>
    </alternativeName>
</protein>
<organism>
    <name type="scientific">Rippkaea orientalis (strain PCC 8801 / RF-1)</name>
    <name type="common">Cyanothece sp. (strain PCC 8801)</name>
    <dbReference type="NCBI Taxonomy" id="41431"/>
    <lineage>
        <taxon>Bacteria</taxon>
        <taxon>Bacillati</taxon>
        <taxon>Cyanobacteriota</taxon>
        <taxon>Cyanophyceae</taxon>
        <taxon>Oscillatoriophycideae</taxon>
        <taxon>Chroococcales</taxon>
        <taxon>Aphanothecaceae</taxon>
        <taxon>Rippkaea</taxon>
        <taxon>Rippkaea orientalis</taxon>
    </lineage>
</organism>
<proteinExistence type="inferred from homology"/>
<keyword id="KW-0472">Membrane</keyword>
<keyword id="KW-0602">Photosynthesis</keyword>
<keyword id="KW-0604">Photosystem II</keyword>
<keyword id="KW-1185">Reference proteome</keyword>
<keyword id="KW-0793">Thylakoid</keyword>
<keyword id="KW-0812">Transmembrane</keyword>
<keyword id="KW-1133">Transmembrane helix</keyword>
<gene>
    <name evidence="1" type="primary">psb30</name>
    <name evidence="1" type="synonym">ycf12</name>
    <name type="ordered locus">PCC8801_3591</name>
</gene>
<evidence type="ECO:0000255" key="1">
    <source>
        <dbReference type="HAMAP-Rule" id="MF_01329"/>
    </source>
</evidence>
<reference key="1">
    <citation type="journal article" date="2011" name="MBio">
        <title>Novel metabolic attributes of the genus Cyanothece, comprising a group of unicellular nitrogen-fixing Cyanobacteria.</title>
        <authorList>
            <person name="Bandyopadhyay A."/>
            <person name="Elvitigala T."/>
            <person name="Welsh E."/>
            <person name="Stockel J."/>
            <person name="Liberton M."/>
            <person name="Min H."/>
            <person name="Sherman L.A."/>
            <person name="Pakrasi H.B."/>
        </authorList>
    </citation>
    <scope>NUCLEOTIDE SEQUENCE [LARGE SCALE GENOMIC DNA]</scope>
    <source>
        <strain>PCC 8801 / RF-1</strain>
    </source>
</reference>